<sequence length="644" mass="71653">MSDVKVYPVDPNVAANALINEEQYQEMYKRSIDDPAAFWAEQAEARIDWFKKWDNVLDFDLRKGHIKWFEGAKLNVSYNCIDRHLEKRGDKVAILWEGDNPAADRKITYRELSALVNKFANALKARGVKKGDRVCIYMPMIPEAAVAMLACTRIGAVHSIVFGGFSPDALRDRIIDAECRVVITADGGMRGSKKIPLRKNVETALAQCPNVHTCFVVQDTQLEIEWTEGRDVWYHEAIAAASADCPPEEMDAEDPLFVLYTSGSTGKPKGVLHTTGGYLLYASITHQYIFDYHEDDIYWCTADVGWVTGHTYIVYGPLANGATTLMFEGVPTYPDASRFWQVVDKHQVSIFYTAPTAIRSIMSQGDALVKATSRQSLRILGSVGEPINPEAWEWYYHVVGEGRCPIVDTWWQTETGGILITPLPGATPLKPGSATRPFFGVNPKVLSNEGKEMEGPCEGILVLDHPWPGMMRTVYGDHDRFINTYFANYPGYYFCGDGCRRDEDGYYWITGRVDDVINVSGHRLGTAEVESALVLHDQVAEAAVVGMPHEIKGQGIYAYVTLMSGVEPSDALKTELVKLVRKEIGPIASLDVIQFAPGLPKTRSGKIMRRILRKIAAHEVDTLGDTSTLADPSVVQNLIDNMPK</sequence>
<accession>A0L576</accession>
<keyword id="KW-0007">Acetylation</keyword>
<keyword id="KW-0067">ATP-binding</keyword>
<keyword id="KW-0436">Ligase</keyword>
<keyword id="KW-0460">Magnesium</keyword>
<keyword id="KW-0479">Metal-binding</keyword>
<keyword id="KW-0547">Nucleotide-binding</keyword>
<keyword id="KW-1185">Reference proteome</keyword>
<reference key="1">
    <citation type="journal article" date="2009" name="Appl. Environ. Microbiol.">
        <title>Complete genome sequence of the chemolithoautotrophic marine magnetotactic coccus strain MC-1.</title>
        <authorList>
            <person name="Schubbe S."/>
            <person name="Williams T.J."/>
            <person name="Xie G."/>
            <person name="Kiss H.E."/>
            <person name="Brettin T.S."/>
            <person name="Martinez D."/>
            <person name="Ross C.A."/>
            <person name="Schuler D."/>
            <person name="Cox B.L."/>
            <person name="Nealson K.H."/>
            <person name="Bazylinski D.A."/>
        </authorList>
    </citation>
    <scope>NUCLEOTIDE SEQUENCE [LARGE SCALE GENOMIC DNA]</scope>
    <source>
        <strain>ATCC BAA-1437 / JCM 17883 / MC-1</strain>
    </source>
</reference>
<evidence type="ECO:0000255" key="1">
    <source>
        <dbReference type="HAMAP-Rule" id="MF_01123"/>
    </source>
</evidence>
<name>ACSA_MAGMM</name>
<dbReference type="EC" id="6.2.1.1" evidence="1"/>
<dbReference type="EMBL" id="CP000471">
    <property type="protein sequence ID" value="ABK43119.1"/>
    <property type="molecule type" value="Genomic_DNA"/>
</dbReference>
<dbReference type="RefSeq" id="WP_011712286.1">
    <property type="nucleotide sequence ID" value="NC_008576.1"/>
</dbReference>
<dbReference type="SMR" id="A0L576"/>
<dbReference type="STRING" id="156889.Mmc1_0598"/>
<dbReference type="KEGG" id="mgm:Mmc1_0598"/>
<dbReference type="eggNOG" id="COG0365">
    <property type="taxonomic scope" value="Bacteria"/>
</dbReference>
<dbReference type="HOGENOM" id="CLU_000022_3_6_5"/>
<dbReference type="OrthoDB" id="9803968at2"/>
<dbReference type="Proteomes" id="UP000002586">
    <property type="component" value="Chromosome"/>
</dbReference>
<dbReference type="GO" id="GO:0005829">
    <property type="term" value="C:cytosol"/>
    <property type="evidence" value="ECO:0007669"/>
    <property type="project" value="TreeGrafter"/>
</dbReference>
<dbReference type="GO" id="GO:0003987">
    <property type="term" value="F:acetate-CoA ligase activity"/>
    <property type="evidence" value="ECO:0007669"/>
    <property type="project" value="UniProtKB-UniRule"/>
</dbReference>
<dbReference type="GO" id="GO:0016208">
    <property type="term" value="F:AMP binding"/>
    <property type="evidence" value="ECO:0007669"/>
    <property type="project" value="InterPro"/>
</dbReference>
<dbReference type="GO" id="GO:0005524">
    <property type="term" value="F:ATP binding"/>
    <property type="evidence" value="ECO:0007669"/>
    <property type="project" value="UniProtKB-KW"/>
</dbReference>
<dbReference type="GO" id="GO:0046872">
    <property type="term" value="F:metal ion binding"/>
    <property type="evidence" value="ECO:0007669"/>
    <property type="project" value="UniProtKB-KW"/>
</dbReference>
<dbReference type="GO" id="GO:0019427">
    <property type="term" value="P:acetyl-CoA biosynthetic process from acetate"/>
    <property type="evidence" value="ECO:0007669"/>
    <property type="project" value="InterPro"/>
</dbReference>
<dbReference type="CDD" id="cd05966">
    <property type="entry name" value="ACS"/>
    <property type="match status" value="1"/>
</dbReference>
<dbReference type="FunFam" id="3.30.300.30:FF:000004">
    <property type="entry name" value="Acetyl-coenzyme A synthetase"/>
    <property type="match status" value="1"/>
</dbReference>
<dbReference type="FunFam" id="3.40.50.12780:FF:000001">
    <property type="entry name" value="Acetyl-coenzyme A synthetase"/>
    <property type="match status" value="1"/>
</dbReference>
<dbReference type="Gene3D" id="3.30.300.30">
    <property type="match status" value="1"/>
</dbReference>
<dbReference type="Gene3D" id="3.40.50.12780">
    <property type="entry name" value="N-terminal domain of ligase-like"/>
    <property type="match status" value="1"/>
</dbReference>
<dbReference type="HAMAP" id="MF_01123">
    <property type="entry name" value="Ac_CoA_synth"/>
    <property type="match status" value="1"/>
</dbReference>
<dbReference type="InterPro" id="IPR011904">
    <property type="entry name" value="Ac_CoA_lig"/>
</dbReference>
<dbReference type="InterPro" id="IPR032387">
    <property type="entry name" value="ACAS_N"/>
</dbReference>
<dbReference type="InterPro" id="IPR025110">
    <property type="entry name" value="AMP-bd_C"/>
</dbReference>
<dbReference type="InterPro" id="IPR045851">
    <property type="entry name" value="AMP-bd_C_sf"/>
</dbReference>
<dbReference type="InterPro" id="IPR020845">
    <property type="entry name" value="AMP-binding_CS"/>
</dbReference>
<dbReference type="InterPro" id="IPR000873">
    <property type="entry name" value="AMP-dep_synth/lig_dom"/>
</dbReference>
<dbReference type="InterPro" id="IPR042099">
    <property type="entry name" value="ANL_N_sf"/>
</dbReference>
<dbReference type="NCBIfam" id="TIGR02188">
    <property type="entry name" value="Ac_CoA_lig_AcsA"/>
    <property type="match status" value="1"/>
</dbReference>
<dbReference type="NCBIfam" id="NF001208">
    <property type="entry name" value="PRK00174.1"/>
    <property type="match status" value="1"/>
</dbReference>
<dbReference type="PANTHER" id="PTHR24095">
    <property type="entry name" value="ACETYL-COENZYME A SYNTHETASE"/>
    <property type="match status" value="1"/>
</dbReference>
<dbReference type="PANTHER" id="PTHR24095:SF14">
    <property type="entry name" value="ACETYL-COENZYME A SYNTHETASE 1"/>
    <property type="match status" value="1"/>
</dbReference>
<dbReference type="Pfam" id="PF16177">
    <property type="entry name" value="ACAS_N"/>
    <property type="match status" value="1"/>
</dbReference>
<dbReference type="Pfam" id="PF00501">
    <property type="entry name" value="AMP-binding"/>
    <property type="match status" value="1"/>
</dbReference>
<dbReference type="Pfam" id="PF13193">
    <property type="entry name" value="AMP-binding_C"/>
    <property type="match status" value="1"/>
</dbReference>
<dbReference type="SUPFAM" id="SSF56801">
    <property type="entry name" value="Acetyl-CoA synthetase-like"/>
    <property type="match status" value="1"/>
</dbReference>
<dbReference type="PROSITE" id="PS00455">
    <property type="entry name" value="AMP_BINDING"/>
    <property type="match status" value="1"/>
</dbReference>
<organism>
    <name type="scientific">Magnetococcus marinus (strain ATCC BAA-1437 / JCM 17883 / MC-1)</name>
    <dbReference type="NCBI Taxonomy" id="156889"/>
    <lineage>
        <taxon>Bacteria</taxon>
        <taxon>Pseudomonadati</taxon>
        <taxon>Pseudomonadota</taxon>
        <taxon>Alphaproteobacteria</taxon>
        <taxon>Magnetococcales</taxon>
        <taxon>Magnetococcaceae</taxon>
        <taxon>Magnetococcus</taxon>
    </lineage>
</organism>
<proteinExistence type="inferred from homology"/>
<protein>
    <recommendedName>
        <fullName evidence="1">Acetyl-coenzyme A synthetase</fullName>
        <shortName evidence="1">AcCoA synthetase</shortName>
        <shortName evidence="1">Acs</shortName>
        <ecNumber evidence="1">6.2.1.1</ecNumber>
    </recommendedName>
    <alternativeName>
        <fullName evidence="1">Acetate--CoA ligase</fullName>
    </alternativeName>
    <alternativeName>
        <fullName evidence="1">Acyl-activating enzyme</fullName>
    </alternativeName>
</protein>
<gene>
    <name evidence="1" type="primary">acsA</name>
    <name type="ordered locus">Mmc1_0598</name>
</gene>
<feature type="chain" id="PRO_1000065295" description="Acetyl-coenzyme A synthetase">
    <location>
        <begin position="1"/>
        <end position="644"/>
    </location>
</feature>
<feature type="binding site" evidence="1">
    <location>
        <begin position="190"/>
        <end position="193"/>
    </location>
    <ligand>
        <name>CoA</name>
        <dbReference type="ChEBI" id="CHEBI:57287"/>
    </ligand>
</feature>
<feature type="binding site" evidence="1">
    <location>
        <position position="308"/>
    </location>
    <ligand>
        <name>CoA</name>
        <dbReference type="ChEBI" id="CHEBI:57287"/>
    </ligand>
</feature>
<feature type="binding site" evidence="1">
    <location>
        <begin position="384"/>
        <end position="386"/>
    </location>
    <ligand>
        <name>ATP</name>
        <dbReference type="ChEBI" id="CHEBI:30616"/>
    </ligand>
</feature>
<feature type="binding site" evidence="1">
    <location>
        <begin position="408"/>
        <end position="413"/>
    </location>
    <ligand>
        <name>ATP</name>
        <dbReference type="ChEBI" id="CHEBI:30616"/>
    </ligand>
</feature>
<feature type="binding site" evidence="1">
    <location>
        <position position="497"/>
    </location>
    <ligand>
        <name>ATP</name>
        <dbReference type="ChEBI" id="CHEBI:30616"/>
    </ligand>
</feature>
<feature type="binding site" evidence="1">
    <location>
        <position position="512"/>
    </location>
    <ligand>
        <name>ATP</name>
        <dbReference type="ChEBI" id="CHEBI:30616"/>
    </ligand>
</feature>
<feature type="binding site" evidence="1">
    <location>
        <position position="520"/>
    </location>
    <ligand>
        <name>CoA</name>
        <dbReference type="ChEBI" id="CHEBI:57287"/>
    </ligand>
</feature>
<feature type="binding site" evidence="1">
    <location>
        <position position="523"/>
    </location>
    <ligand>
        <name>ATP</name>
        <dbReference type="ChEBI" id="CHEBI:30616"/>
    </ligand>
</feature>
<feature type="binding site" evidence="1">
    <location>
        <position position="534"/>
    </location>
    <ligand>
        <name>Mg(2+)</name>
        <dbReference type="ChEBI" id="CHEBI:18420"/>
    </ligand>
</feature>
<feature type="binding site" evidence="1">
    <location>
        <position position="536"/>
    </location>
    <ligand>
        <name>Mg(2+)</name>
        <dbReference type="ChEBI" id="CHEBI:18420"/>
    </ligand>
</feature>
<feature type="binding site" evidence="1">
    <location>
        <position position="539"/>
    </location>
    <ligand>
        <name>Mg(2+)</name>
        <dbReference type="ChEBI" id="CHEBI:18420"/>
    </ligand>
</feature>
<feature type="binding site" evidence="1">
    <location>
        <position position="581"/>
    </location>
    <ligand>
        <name>CoA</name>
        <dbReference type="ChEBI" id="CHEBI:57287"/>
    </ligand>
</feature>
<feature type="modified residue" description="N6-acetyllysine" evidence="1">
    <location>
        <position position="606"/>
    </location>
</feature>
<comment type="function">
    <text evidence="1">Catalyzes the conversion of acetate into acetyl-CoA (AcCoA), an essential intermediate at the junction of anabolic and catabolic pathways. AcsA undergoes a two-step reaction. In the first half reaction, AcsA combines acetate with ATP to form acetyl-adenylate (AcAMP) intermediate. In the second half reaction, it can then transfer the acetyl group from AcAMP to the sulfhydryl group of CoA, forming the product AcCoA.</text>
</comment>
<comment type="catalytic activity">
    <reaction evidence="1">
        <text>acetate + ATP + CoA = acetyl-CoA + AMP + diphosphate</text>
        <dbReference type="Rhea" id="RHEA:23176"/>
        <dbReference type="ChEBI" id="CHEBI:30089"/>
        <dbReference type="ChEBI" id="CHEBI:30616"/>
        <dbReference type="ChEBI" id="CHEBI:33019"/>
        <dbReference type="ChEBI" id="CHEBI:57287"/>
        <dbReference type="ChEBI" id="CHEBI:57288"/>
        <dbReference type="ChEBI" id="CHEBI:456215"/>
        <dbReference type="EC" id="6.2.1.1"/>
    </reaction>
</comment>
<comment type="cofactor">
    <cofactor evidence="1">
        <name>Mg(2+)</name>
        <dbReference type="ChEBI" id="CHEBI:18420"/>
    </cofactor>
</comment>
<comment type="PTM">
    <text evidence="1">Acetylated. Deacetylation by the SIR2-homolog deacetylase activates the enzyme.</text>
</comment>
<comment type="similarity">
    <text evidence="1">Belongs to the ATP-dependent AMP-binding enzyme family.</text>
</comment>